<name>PBAN_SPOLI</name>
<comment type="function">
    <text evidence="1">A hormone that controls sex pheromone production in females and pheromone responsiveness in male.</text>
</comment>
<comment type="subcellular location">
    <subcellularLocation>
        <location evidence="1">Secreted</location>
    </subcellularLocation>
</comment>
<comment type="tissue specificity">
    <text evidence="3">Expressed in the subesophageal ganglion.</text>
</comment>
<comment type="developmental stage">
    <text evidence="3">Detected in both larvae and adults.</text>
</comment>
<comment type="mass spectrometry">
    <molecule>Diapause hormone</molecule>
    <text>Diapause hormone.</text>
</comment>
<comment type="mass spectrometry">
    <molecule>Alpha-subesophageal ganglion neuropeptide</molecule>
    <text>Alpha-subesophageal ganglion neuropeptide.</text>
</comment>
<comment type="mass spectrometry">
    <molecule>Beta-subesophageal ganglion neuropeptide</molecule>
    <text>Beta-subesophageal ganglion neuropeptide.</text>
</comment>
<comment type="mass spectrometry">
    <molecule>Pheromone biosynthesis-activating neuropeptide</molecule>
    <text>Pheromone biosynthesis-activating neuropeptide.</text>
</comment>
<comment type="mass spectrometry">
    <molecule>Gamma-subesophageal ganglion neuropeptide</molecule>
    <text>Gamma-subesophageal ganglion neuropeptide.</text>
</comment>
<comment type="similarity">
    <text evidence="2">Belongs to the pyrokinin family.</text>
</comment>
<reference evidence="6" key="1">
    <citation type="journal article" date="2002" name="Insect Biochem. Mol. Biol.">
        <title>A new member of the PBAN family in Spodoptera littoralis: molecular cloning and immunovisualisation in scotophase hemolymph.</title>
        <authorList>
            <person name="Iglesias F."/>
            <person name="Marco P."/>
            <person name="Francois M.C."/>
            <person name="Camps F."/>
            <person name="Fabrias G."/>
            <person name="Jacquin-Joly E."/>
        </authorList>
    </citation>
    <scope>NUCLEOTIDE SEQUENCE [MRNA]</scope>
    <source>
        <tissue evidence="6">Brain</tissue>
    </source>
</reference>
<reference evidence="5" key="2">
    <citation type="journal article" date="2017" name="Peptides">
        <title>Identification of mature peptides from pban and capa genes of the moths Heliothis peltigera and Spodoptera littoralis.</title>
        <authorList>
            <person name="Ragionieri L."/>
            <person name="Oezbagci B."/>
            <person name="Neupert S."/>
            <person name="Salts Y."/>
            <person name="Davidovitch M."/>
            <person name="Altstein M."/>
            <person name="Predel R."/>
        </authorList>
    </citation>
    <scope>NUCLEOTIDE SEQUENCE [MRNA]</scope>
    <scope>PROTEIN SEQUENCE OF 18-44; 94-100; 103-120; 124-156 AND 159-166</scope>
    <scope>TISSUE SPECIFICITY</scope>
    <scope>DEVELOPMENTAL STAGE</scope>
    <scope>MASS SPECTROMETRY</scope>
    <scope>AMIDATION AT LEU-44; LEU-100; LEU-120; LEU-156 AND LEU-166</scope>
    <scope>IDENTIFICATION BY MASS SPECTROMETRY</scope>
    <source>
        <tissue evidence="4">Nervous system</tissue>
    </source>
</reference>
<sequence>MFSPLLFFAVSISCVLANSNEIKDGGSDRGAHSDRAGLWFGPRLGKRSLRISTEDNRQAFFKLLEAADALKYYYDRLPYEMQADEPETRVTKKVIFTPKLGRSLAYDDKVFENVEFTPRLGRRLADDMPATPADQELYRPDPDQIDSRTKYFSPRLGRTMNFSPRLGRELSYDMLPSKLRLVRSTNRTQST</sequence>
<accession>Q95P48</accession>
<organism evidence="6">
    <name type="scientific">Spodoptera littoralis</name>
    <name type="common">Egyptian cotton leafworm</name>
    <dbReference type="NCBI Taxonomy" id="7109"/>
    <lineage>
        <taxon>Eukaryota</taxon>
        <taxon>Metazoa</taxon>
        <taxon>Ecdysozoa</taxon>
        <taxon>Arthropoda</taxon>
        <taxon>Hexapoda</taxon>
        <taxon>Insecta</taxon>
        <taxon>Pterygota</taxon>
        <taxon>Neoptera</taxon>
        <taxon>Endopterygota</taxon>
        <taxon>Lepidoptera</taxon>
        <taxon>Glossata</taxon>
        <taxon>Ditrysia</taxon>
        <taxon>Noctuoidea</taxon>
        <taxon>Noctuidae</taxon>
        <taxon>Amphipyrinae</taxon>
        <taxon>Spodoptera</taxon>
    </lineage>
</organism>
<dbReference type="EMBL" id="AF401480">
    <property type="protein sequence ID" value="AAK84160.1"/>
    <property type="molecule type" value="mRNA"/>
</dbReference>
<dbReference type="SMR" id="Q95P48"/>
<dbReference type="GO" id="GO:0005576">
    <property type="term" value="C:extracellular region"/>
    <property type="evidence" value="ECO:0007669"/>
    <property type="project" value="UniProtKB-SubCell"/>
</dbReference>
<dbReference type="GO" id="GO:0005184">
    <property type="term" value="F:neuropeptide hormone activity"/>
    <property type="evidence" value="ECO:0007669"/>
    <property type="project" value="InterPro"/>
</dbReference>
<dbReference type="GO" id="GO:0007218">
    <property type="term" value="P:neuropeptide signaling pathway"/>
    <property type="evidence" value="ECO:0007669"/>
    <property type="project" value="UniProtKB-KW"/>
</dbReference>
<dbReference type="GO" id="GO:0042811">
    <property type="term" value="P:pheromone biosynthetic process"/>
    <property type="evidence" value="ECO:0007669"/>
    <property type="project" value="InterPro"/>
</dbReference>
<dbReference type="InterPro" id="IPR008730">
    <property type="entry name" value="PBAN"/>
</dbReference>
<dbReference type="InterPro" id="IPR001484">
    <property type="entry name" value="Pyrokinin_CS"/>
</dbReference>
<dbReference type="Pfam" id="PF05874">
    <property type="entry name" value="PBAN"/>
    <property type="match status" value="1"/>
</dbReference>
<dbReference type="PROSITE" id="PS00539">
    <property type="entry name" value="PYROKININ"/>
    <property type="match status" value="4"/>
</dbReference>
<keyword id="KW-0027">Amidation</keyword>
<keyword id="KW-0165">Cleavage on pair of basic residues</keyword>
<keyword id="KW-0903">Direct protein sequencing</keyword>
<keyword id="KW-0372">Hormone</keyword>
<keyword id="KW-0527">Neuropeptide</keyword>
<keyword id="KW-0964">Secreted</keyword>
<keyword id="KW-0732">Signal</keyword>
<proteinExistence type="evidence at protein level"/>
<evidence type="ECO:0000250" key="1">
    <source>
        <dbReference type="UniProtKB" id="P09971"/>
    </source>
</evidence>
<evidence type="ECO:0000255" key="2"/>
<evidence type="ECO:0000269" key="3">
    <source>
    </source>
</evidence>
<evidence type="ECO:0000303" key="4">
    <source>
    </source>
</evidence>
<evidence type="ECO:0000305" key="5"/>
<evidence type="ECO:0000312" key="6">
    <source>
        <dbReference type="EMBL" id="AAK84160.1"/>
    </source>
</evidence>
<protein>
    <recommendedName>
        <fullName evidence="4">PBAN-type neuropeptides</fullName>
    </recommendedName>
    <component>
        <recommendedName>
            <fullName evidence="4">Diapause hormone</fullName>
            <shortName evidence="4">DH</shortName>
        </recommendedName>
        <alternativeName>
            <fullName evidence="4">trypto-pyrokinin</fullName>
            <shortName evidence="4">tryptoPK</shortName>
        </alternativeName>
    </component>
    <component>
        <recommendedName>
            <fullName evidence="4">Alpha-subesophageal ganglion neuropeptide</fullName>
            <shortName>Alpha-SG neuropeptide</shortName>
            <shortName evidence="4">Alpha-SGNP</shortName>
        </recommendedName>
        <alternativeName>
            <fullName evidence="4">Pyrokinin-1</fullName>
            <shortName evidence="4">PK-1</shortName>
        </alternativeName>
    </component>
    <component>
        <recommendedName>
            <fullName evidence="4">Beta-subesophageal ganglion neuropeptide</fullName>
            <shortName>Beta-SG neuropeptide</shortName>
            <shortName evidence="4">Beta-SGNP</shortName>
        </recommendedName>
        <alternativeName>
            <fullName evidence="4">Pyrokinin-2</fullName>
            <shortName evidence="4">PK-2</shortName>
        </alternativeName>
    </component>
    <component>
        <recommendedName>
            <fullName evidence="4">Pheromone biosynthesis-activating neuropeptide</fullName>
            <shortName>PBAN</shortName>
        </recommendedName>
        <alternativeName>
            <fullName evidence="4">Pyrokinin-3</fullName>
            <shortName evidence="4">PK-3</shortName>
        </alternativeName>
    </component>
    <component>
        <recommendedName>
            <fullName evidence="4">Gamma-subesophageal ganglion neuropeptide</fullName>
            <shortName>Gamma-SG neuropeptide</shortName>
            <shortName evidence="4">Gamma-SGNP</shortName>
        </recommendedName>
        <alternativeName>
            <fullName evidence="4">Pyrokinin-4</fullName>
            <shortName evidence="4">PK-4</shortName>
        </alternativeName>
    </component>
</protein>
<feature type="signal peptide" evidence="2">
    <location>
        <begin position="1"/>
        <end position="17"/>
    </location>
</feature>
<feature type="peptide" id="PRO_0000442319" description="Diapause hormone" evidence="3">
    <location>
        <begin position="18"/>
        <end position="44"/>
    </location>
</feature>
<feature type="propeptide" id="PRO_0000442320" evidence="4">
    <location>
        <begin position="48"/>
        <end position="91"/>
    </location>
</feature>
<feature type="peptide" id="PRO_0000442321" description="Alpha-subesophageal ganglion neuropeptide" evidence="3">
    <location>
        <begin position="94"/>
        <end position="100"/>
    </location>
</feature>
<feature type="peptide" id="PRO_0000442322" description="Beta-subesophageal ganglion neuropeptide" evidence="3">
    <location>
        <begin position="103"/>
        <end position="120"/>
    </location>
</feature>
<feature type="peptide" id="PRO_0000442323" description="Pheromone biosynthesis-activating neuropeptide" evidence="3">
    <location>
        <begin position="124"/>
        <end position="156"/>
    </location>
</feature>
<feature type="peptide" id="PRO_0000442324" description="Gamma-subesophageal ganglion neuropeptide" evidence="3">
    <location>
        <begin position="159"/>
        <end position="166"/>
    </location>
</feature>
<feature type="propeptide" id="PRO_0000442325" evidence="4">
    <location>
        <begin position="169"/>
        <end position="191"/>
    </location>
</feature>
<feature type="modified residue" description="Leucine amide" evidence="3">
    <location>
        <position position="44"/>
    </location>
</feature>
<feature type="modified residue" description="Leucine amide" evidence="3">
    <location>
        <position position="100"/>
    </location>
</feature>
<feature type="modified residue" description="Leucine amide" evidence="3">
    <location>
        <position position="120"/>
    </location>
</feature>
<feature type="modified residue" description="Leucine amide" evidence="3">
    <location>
        <position position="156"/>
    </location>
</feature>
<feature type="modified residue" description="Leucine amide" evidence="3">
    <location>
        <position position="166"/>
    </location>
</feature>